<feature type="chain" id="PRO_0000282655" description="Prephenate dehydrogenase">
    <location>
        <begin position="1"/>
        <end position="363"/>
    </location>
</feature>
<feature type="domain" description="Prephenate/arogenate dehydrogenase" evidence="2">
    <location>
        <begin position="2"/>
        <end position="291"/>
    </location>
</feature>
<feature type="domain" description="ACT" evidence="3">
    <location>
        <begin position="296"/>
        <end position="363"/>
    </location>
</feature>
<feature type="binding site" evidence="1">
    <location>
        <begin position="3"/>
        <end position="33"/>
    </location>
    <ligand>
        <name>NAD(+)</name>
        <dbReference type="ChEBI" id="CHEBI:57540"/>
    </ligand>
</feature>
<evidence type="ECO:0000255" key="1"/>
<evidence type="ECO:0000255" key="2">
    <source>
        <dbReference type="PROSITE-ProRule" id="PRU00522"/>
    </source>
</evidence>
<evidence type="ECO:0000255" key="3">
    <source>
        <dbReference type="PROSITE-ProRule" id="PRU01007"/>
    </source>
</evidence>
<evidence type="ECO:0000305" key="4"/>
<keyword id="KW-0028">Amino-acid biosynthesis</keyword>
<keyword id="KW-0057">Aromatic amino acid biosynthesis</keyword>
<keyword id="KW-0520">NAD</keyword>
<keyword id="KW-0560">Oxidoreductase</keyword>
<keyword id="KW-0827">Tyrosine biosynthesis</keyword>
<protein>
    <recommendedName>
        <fullName>Prephenate dehydrogenase</fullName>
        <shortName>PDH</shortName>
        <ecNumber>1.3.1.12</ecNumber>
    </recommendedName>
</protein>
<gene>
    <name type="primary">tyrA</name>
    <name type="ordered locus">SACOL1401</name>
</gene>
<organism>
    <name type="scientific">Staphylococcus aureus (strain COL)</name>
    <dbReference type="NCBI Taxonomy" id="93062"/>
    <lineage>
        <taxon>Bacteria</taxon>
        <taxon>Bacillati</taxon>
        <taxon>Bacillota</taxon>
        <taxon>Bacilli</taxon>
        <taxon>Bacillales</taxon>
        <taxon>Staphylococcaceae</taxon>
        <taxon>Staphylococcus</taxon>
    </lineage>
</organism>
<reference key="1">
    <citation type="journal article" date="2005" name="J. Bacteriol.">
        <title>Insights on evolution of virulence and resistance from the complete genome analysis of an early methicillin-resistant Staphylococcus aureus strain and a biofilm-producing methicillin-resistant Staphylococcus epidermidis strain.</title>
        <authorList>
            <person name="Gill S.R."/>
            <person name="Fouts D.E."/>
            <person name="Archer G.L."/>
            <person name="Mongodin E.F."/>
            <person name="DeBoy R.T."/>
            <person name="Ravel J."/>
            <person name="Paulsen I.T."/>
            <person name="Kolonay J.F."/>
            <person name="Brinkac L.M."/>
            <person name="Beanan M.J."/>
            <person name="Dodson R.J."/>
            <person name="Daugherty S.C."/>
            <person name="Madupu R."/>
            <person name="Angiuoli S.V."/>
            <person name="Durkin A.S."/>
            <person name="Haft D.H."/>
            <person name="Vamathevan J.J."/>
            <person name="Khouri H."/>
            <person name="Utterback T.R."/>
            <person name="Lee C."/>
            <person name="Dimitrov G."/>
            <person name="Jiang L."/>
            <person name="Qin H."/>
            <person name="Weidman J."/>
            <person name="Tran K."/>
            <person name="Kang K.H."/>
            <person name="Hance I.R."/>
            <person name="Nelson K.E."/>
            <person name="Fraser C.M."/>
        </authorList>
    </citation>
    <scope>NUCLEOTIDE SEQUENCE [LARGE SCALE GENOMIC DNA]</scope>
    <source>
        <strain>COL</strain>
    </source>
</reference>
<name>TYRA_STAAC</name>
<proteinExistence type="inferred from homology"/>
<accession>Q5HG54</accession>
<comment type="catalytic activity">
    <reaction>
        <text>prephenate + NAD(+) = 3-(4-hydroxyphenyl)pyruvate + CO2 + NADH</text>
        <dbReference type="Rhea" id="RHEA:13869"/>
        <dbReference type="ChEBI" id="CHEBI:16526"/>
        <dbReference type="ChEBI" id="CHEBI:29934"/>
        <dbReference type="ChEBI" id="CHEBI:36242"/>
        <dbReference type="ChEBI" id="CHEBI:57540"/>
        <dbReference type="ChEBI" id="CHEBI:57945"/>
        <dbReference type="EC" id="1.3.1.12"/>
    </reaction>
</comment>
<comment type="pathway">
    <text>Amino-acid biosynthesis; L-tyrosine biosynthesis; (4-hydroxyphenyl)pyruvate from prephenate (NAD(+) route): step 1/1.</text>
</comment>
<comment type="similarity">
    <text evidence="4">Belongs to the prephenate/arogenate dehydrogenase family.</text>
</comment>
<sequence length="363" mass="40395">MTTVLFVGLGLIGGSLASNIKYHNPNTNIIAYDADTSQLDKAKSIGIINEKCLNYSEAIKKADVIIYATPVAITNKYLSELIDMPTKPGVIVSDTGSTKAMIQQHECNLLKHNIHLVSGHPMAGSHKSGVLNAKKHLFENAYYILVYNEPRNEQAANTLKELLSPTLAKFIVTTAEEHDYVTSVVSHLPHIVASSLVHVSQKNGQEHHLVNKLAAGGFRDITRIASSNAQMWKDITLSNKTYILEMIRQLKSQFQDLERLIESNDSEKLLSFFAQAKSYRDALPAKQLGGLNTAYDLYVDIPDESGMISKVTYILSLHNISISNLRILEVREDIYGALKISFKNPTDRERGMQALSDFDCYIQ</sequence>
<dbReference type="EC" id="1.3.1.12"/>
<dbReference type="EMBL" id="CP000046">
    <property type="protein sequence ID" value="AAW36649.1"/>
    <property type="molecule type" value="Genomic_DNA"/>
</dbReference>
<dbReference type="RefSeq" id="WP_000214266.1">
    <property type="nucleotide sequence ID" value="NZ_JBGOFO010000003.1"/>
</dbReference>
<dbReference type="SMR" id="Q5HG54"/>
<dbReference type="KEGG" id="sac:SACOL1401"/>
<dbReference type="HOGENOM" id="CLU_055968_2_1_9"/>
<dbReference type="UniPathway" id="UPA00122">
    <property type="reaction ID" value="UER00961"/>
</dbReference>
<dbReference type="Proteomes" id="UP000000530">
    <property type="component" value="Chromosome"/>
</dbReference>
<dbReference type="GO" id="GO:0070403">
    <property type="term" value="F:NAD+ binding"/>
    <property type="evidence" value="ECO:0007669"/>
    <property type="project" value="InterPro"/>
</dbReference>
<dbReference type="GO" id="GO:0008977">
    <property type="term" value="F:prephenate dehydrogenase (NAD+) activity"/>
    <property type="evidence" value="ECO:0007669"/>
    <property type="project" value="UniProtKB-EC"/>
</dbReference>
<dbReference type="GO" id="GO:0004665">
    <property type="term" value="F:prephenate dehydrogenase (NADP+) activity"/>
    <property type="evidence" value="ECO:0007669"/>
    <property type="project" value="InterPro"/>
</dbReference>
<dbReference type="GO" id="GO:0006571">
    <property type="term" value="P:tyrosine biosynthetic process"/>
    <property type="evidence" value="ECO:0007669"/>
    <property type="project" value="UniProtKB-UniPathway"/>
</dbReference>
<dbReference type="CDD" id="cd04909">
    <property type="entry name" value="ACT_PDH-BS"/>
    <property type="match status" value="1"/>
</dbReference>
<dbReference type="FunFam" id="1.10.3660.10:FF:000003">
    <property type="entry name" value="Prephenate dehydrogenase"/>
    <property type="match status" value="1"/>
</dbReference>
<dbReference type="FunFam" id="3.40.50.720:FF:000208">
    <property type="entry name" value="Prephenate dehydrogenase"/>
    <property type="match status" value="1"/>
</dbReference>
<dbReference type="Gene3D" id="1.10.3660.10">
    <property type="entry name" value="6-phosphogluconate dehydrogenase C-terminal like domain"/>
    <property type="match status" value="1"/>
</dbReference>
<dbReference type="Gene3D" id="3.40.50.720">
    <property type="entry name" value="NAD(P)-binding Rossmann-like Domain"/>
    <property type="match status" value="1"/>
</dbReference>
<dbReference type="InterPro" id="IPR008927">
    <property type="entry name" value="6-PGluconate_DH-like_C_sf"/>
</dbReference>
<dbReference type="InterPro" id="IPR045865">
    <property type="entry name" value="ACT-like_dom_sf"/>
</dbReference>
<dbReference type="InterPro" id="IPR002912">
    <property type="entry name" value="ACT_dom"/>
</dbReference>
<dbReference type="InterPro" id="IPR036291">
    <property type="entry name" value="NAD(P)-bd_dom_sf"/>
</dbReference>
<dbReference type="InterPro" id="IPR046825">
    <property type="entry name" value="PDH_C"/>
</dbReference>
<dbReference type="InterPro" id="IPR046826">
    <property type="entry name" value="PDH_N"/>
</dbReference>
<dbReference type="InterPro" id="IPR050812">
    <property type="entry name" value="Preph/Arog_dehydrog"/>
</dbReference>
<dbReference type="InterPro" id="IPR003099">
    <property type="entry name" value="Prephen_DH"/>
</dbReference>
<dbReference type="NCBIfam" id="NF005106">
    <property type="entry name" value="PRK06545.1-4"/>
    <property type="match status" value="1"/>
</dbReference>
<dbReference type="NCBIfam" id="NF005107">
    <property type="entry name" value="PRK06545.1-5"/>
    <property type="match status" value="1"/>
</dbReference>
<dbReference type="PANTHER" id="PTHR21363">
    <property type="entry name" value="PREPHENATE DEHYDROGENASE"/>
    <property type="match status" value="1"/>
</dbReference>
<dbReference type="PANTHER" id="PTHR21363:SF0">
    <property type="entry name" value="PREPHENATE DEHYDROGENASE [NADP(+)]"/>
    <property type="match status" value="1"/>
</dbReference>
<dbReference type="Pfam" id="PF20463">
    <property type="entry name" value="PDH_C"/>
    <property type="match status" value="1"/>
</dbReference>
<dbReference type="Pfam" id="PF02153">
    <property type="entry name" value="PDH_N"/>
    <property type="match status" value="1"/>
</dbReference>
<dbReference type="SUPFAM" id="SSF48179">
    <property type="entry name" value="6-phosphogluconate dehydrogenase C-terminal domain-like"/>
    <property type="match status" value="1"/>
</dbReference>
<dbReference type="SUPFAM" id="SSF55021">
    <property type="entry name" value="ACT-like"/>
    <property type="match status" value="1"/>
</dbReference>
<dbReference type="SUPFAM" id="SSF51735">
    <property type="entry name" value="NAD(P)-binding Rossmann-fold domains"/>
    <property type="match status" value="1"/>
</dbReference>
<dbReference type="PROSITE" id="PS51671">
    <property type="entry name" value="ACT"/>
    <property type="match status" value="1"/>
</dbReference>
<dbReference type="PROSITE" id="PS51176">
    <property type="entry name" value="PDH_ADH"/>
    <property type="match status" value="1"/>
</dbReference>